<keyword id="KW-0143">Chaperone</keyword>
<keyword id="KW-0963">Cytoplasm</keyword>
<keyword id="KW-0996">Nickel insertion</keyword>
<keyword id="KW-1185">Reference proteome</keyword>
<evidence type="ECO:0000255" key="1">
    <source>
        <dbReference type="HAMAP-Rule" id="MF_01384"/>
    </source>
</evidence>
<feature type="chain" id="PRO_0000340422" description="Urease accessory protein UreD 2">
    <location>
        <begin position="1"/>
        <end position="302"/>
    </location>
</feature>
<proteinExistence type="inferred from homology"/>
<sequence length="302" mass="33715">MLGKARELANYQDEPEQLPTGSFGKNAFLRLGFERRPERTVLATLHRRAPLIVQQALYWDEGMPTLPCVSIISNAGGILQGDRYAIEIDLEPDTQAHVTTQSATRIQEMDANFATQTQTITLGANSYLEYIPHPIIPHKHSRFVQQTEVTIHPTATLIYSEVLMAGRKYYGTGELFHYDLFSSKFHAAHTDGTSLFTEKFIVEPARGNVSRLGAMGSFHVFGNLILLTPKTHADRLFETIDPVFDMDEGIAWGASRLPNDAGLLFKVLGMESAPVRAAIRKIWEAARQEVTSASLPENFLWA</sequence>
<comment type="function">
    <text evidence="1">Required for maturation of urease via the functional incorporation of the urease nickel metallocenter.</text>
</comment>
<comment type="subunit">
    <text evidence="1">UreD, UreF and UreG form a complex that acts as a GTP-hydrolysis-dependent molecular chaperone, activating the urease apoprotein by helping to assemble the nickel containing metallocenter of UreC. The UreE protein probably delivers the nickel.</text>
</comment>
<comment type="subcellular location">
    <subcellularLocation>
        <location evidence="1">Cytoplasm</location>
    </subcellularLocation>
</comment>
<comment type="similarity">
    <text evidence="1">Belongs to the UreD family.</text>
</comment>
<dbReference type="EMBL" id="CP000872">
    <property type="protein sequence ID" value="ABX62423.1"/>
    <property type="molecule type" value="Genomic_DNA"/>
</dbReference>
<dbReference type="RefSeq" id="WP_004691636.1">
    <property type="nucleotide sequence ID" value="NC_010103.1"/>
</dbReference>
<dbReference type="SMR" id="A9M618"/>
<dbReference type="GeneID" id="55591022"/>
<dbReference type="KEGG" id="bcs:BCAN_A1389"/>
<dbReference type="HOGENOM" id="CLU_056339_1_0_5"/>
<dbReference type="PhylomeDB" id="A9M618"/>
<dbReference type="Proteomes" id="UP000001385">
    <property type="component" value="Chromosome I"/>
</dbReference>
<dbReference type="GO" id="GO:0005737">
    <property type="term" value="C:cytoplasm"/>
    <property type="evidence" value="ECO:0007669"/>
    <property type="project" value="UniProtKB-SubCell"/>
</dbReference>
<dbReference type="GO" id="GO:0016151">
    <property type="term" value="F:nickel cation binding"/>
    <property type="evidence" value="ECO:0007669"/>
    <property type="project" value="UniProtKB-UniRule"/>
</dbReference>
<dbReference type="HAMAP" id="MF_01384">
    <property type="entry name" value="UreD"/>
    <property type="match status" value="1"/>
</dbReference>
<dbReference type="InterPro" id="IPR002669">
    <property type="entry name" value="UreD"/>
</dbReference>
<dbReference type="PANTHER" id="PTHR33643">
    <property type="entry name" value="UREASE ACCESSORY PROTEIN D"/>
    <property type="match status" value="1"/>
</dbReference>
<dbReference type="PANTHER" id="PTHR33643:SF1">
    <property type="entry name" value="UREASE ACCESSORY PROTEIN D"/>
    <property type="match status" value="1"/>
</dbReference>
<dbReference type="Pfam" id="PF01774">
    <property type="entry name" value="UreD"/>
    <property type="match status" value="1"/>
</dbReference>
<name>URED2_BRUC2</name>
<protein>
    <recommendedName>
        <fullName evidence="1">Urease accessory protein UreD 2</fullName>
    </recommendedName>
</protein>
<reference key="1">
    <citation type="submission" date="2007-10" db="EMBL/GenBank/DDBJ databases">
        <title>Brucella canis ATCC 23365 whole genome shotgun sequencing project.</title>
        <authorList>
            <person name="Setubal J.C."/>
            <person name="Bowns C."/>
            <person name="Boyle S."/>
            <person name="Crasta O.R."/>
            <person name="Czar M.J."/>
            <person name="Dharmanolla C."/>
            <person name="Gillespie J.J."/>
            <person name="Kenyon R.W."/>
            <person name="Lu J."/>
            <person name="Mane S."/>
            <person name="Mohapatra S."/>
            <person name="Nagrani S."/>
            <person name="Purkayastha A."/>
            <person name="Rajasimha H.K."/>
            <person name="Shallom J.M."/>
            <person name="Shallom S."/>
            <person name="Shukla M."/>
            <person name="Snyder E.E."/>
            <person name="Sobral B.W."/>
            <person name="Wattam A.R."/>
            <person name="Will R."/>
            <person name="Williams K."/>
            <person name="Yoo H."/>
            <person name="Bruce D."/>
            <person name="Detter C."/>
            <person name="Munk C."/>
            <person name="Brettin T.S."/>
        </authorList>
    </citation>
    <scope>NUCLEOTIDE SEQUENCE [LARGE SCALE GENOMIC DNA]</scope>
    <source>
        <strain>ATCC 23365 / NCTC 10854 / RM-666</strain>
    </source>
</reference>
<gene>
    <name evidence="1" type="primary">ureD2</name>
    <name type="ordered locus">BCAN_A1389</name>
</gene>
<organism>
    <name type="scientific">Brucella canis (strain ATCC 23365 / NCTC 10854 / RM-666)</name>
    <dbReference type="NCBI Taxonomy" id="483179"/>
    <lineage>
        <taxon>Bacteria</taxon>
        <taxon>Pseudomonadati</taxon>
        <taxon>Pseudomonadota</taxon>
        <taxon>Alphaproteobacteria</taxon>
        <taxon>Hyphomicrobiales</taxon>
        <taxon>Brucellaceae</taxon>
        <taxon>Brucella/Ochrobactrum group</taxon>
        <taxon>Brucella</taxon>
    </lineage>
</organism>
<accession>A9M618</accession>